<keyword id="KW-1003">Cell membrane</keyword>
<keyword id="KW-0472">Membrane</keyword>
<keyword id="KW-1185">Reference proteome</keyword>
<keyword id="KW-0812">Transmembrane</keyword>
<keyword id="KW-1133">Transmembrane helix</keyword>
<accession>P9WNB6</accession>
<accession>L0T9Y7</accession>
<accession>Q10762</accession>
<sequence>MSAYRQPVERYWWARRRSYLRFMLREISCIFVAWFVLYLVLVLRAVGAGGNSYQRFLDFSANPVVVVLNVVALSFLLLHAVTWFGSAPRAMVIQVRGRRVPARAVLAGHYAAWLVVSVIVAWMVLS</sequence>
<dbReference type="EMBL" id="AE000516">
    <property type="protein sequence ID" value="AAK45872.1"/>
    <property type="molecule type" value="Genomic_DNA"/>
</dbReference>
<dbReference type="PIR" id="G70762">
    <property type="entry name" value="G70762"/>
</dbReference>
<dbReference type="RefSeq" id="WP_003407768.1">
    <property type="nucleotide sequence ID" value="NZ_KK341227.1"/>
</dbReference>
<dbReference type="SMR" id="P9WNB6"/>
<dbReference type="KEGG" id="mtc:MT1605"/>
<dbReference type="PATRIC" id="fig|83331.31.peg.1727"/>
<dbReference type="HOGENOM" id="CLU_156492_0_0_11"/>
<dbReference type="Proteomes" id="UP000001020">
    <property type="component" value="Chromosome"/>
</dbReference>
<dbReference type="GO" id="GO:0045283">
    <property type="term" value="C:fumarate reductase complex"/>
    <property type="evidence" value="ECO:0007669"/>
    <property type="project" value="UniProtKB-UniRule"/>
</dbReference>
<dbReference type="GO" id="GO:0005886">
    <property type="term" value="C:plasma membrane"/>
    <property type="evidence" value="ECO:0007669"/>
    <property type="project" value="UniProtKB-SubCell"/>
</dbReference>
<dbReference type="GO" id="GO:0000104">
    <property type="term" value="F:succinate dehydrogenase activity"/>
    <property type="evidence" value="ECO:0007669"/>
    <property type="project" value="UniProtKB-UniRule"/>
</dbReference>
<dbReference type="CDD" id="cd00546">
    <property type="entry name" value="QFR_TypeD_subunitC"/>
    <property type="match status" value="1"/>
</dbReference>
<dbReference type="Gene3D" id="1.20.1300.10">
    <property type="entry name" value="Fumarate reductase/succinate dehydrogenase, transmembrane subunit"/>
    <property type="match status" value="1"/>
</dbReference>
<dbReference type="HAMAP" id="MF_00708">
    <property type="entry name" value="Fumarate_red_C"/>
    <property type="match status" value="1"/>
</dbReference>
<dbReference type="InterPro" id="IPR003510">
    <property type="entry name" value="Fumarate_red_C"/>
</dbReference>
<dbReference type="InterPro" id="IPR034804">
    <property type="entry name" value="SQR/QFR_C/D"/>
</dbReference>
<dbReference type="NCBIfam" id="NF010126">
    <property type="entry name" value="PRK13603.1"/>
    <property type="match status" value="1"/>
</dbReference>
<dbReference type="Pfam" id="PF02300">
    <property type="entry name" value="Fumarate_red_C"/>
    <property type="match status" value="1"/>
</dbReference>
<dbReference type="PIRSF" id="PIRSF000180">
    <property type="entry name" value="FrdC"/>
    <property type="match status" value="1"/>
</dbReference>
<dbReference type="SUPFAM" id="SSF81343">
    <property type="entry name" value="Fumarate reductase respiratory complex transmembrane subunits"/>
    <property type="match status" value="1"/>
</dbReference>
<feature type="chain" id="PRO_0000427155" description="Fumarate reductase subunit C">
    <location>
        <begin position="1"/>
        <end position="126"/>
    </location>
</feature>
<feature type="transmembrane region" description="Helical" evidence="1">
    <location>
        <begin position="30"/>
        <end position="50"/>
    </location>
</feature>
<feature type="transmembrane region" description="Helical" evidence="1">
    <location>
        <begin position="64"/>
        <end position="84"/>
    </location>
</feature>
<feature type="transmembrane region" description="Helical" evidence="1">
    <location>
        <begin position="105"/>
        <end position="125"/>
    </location>
</feature>
<proteinExistence type="inferred from homology"/>
<organism>
    <name type="scientific">Mycobacterium tuberculosis (strain CDC 1551 / Oshkosh)</name>
    <dbReference type="NCBI Taxonomy" id="83331"/>
    <lineage>
        <taxon>Bacteria</taxon>
        <taxon>Bacillati</taxon>
        <taxon>Actinomycetota</taxon>
        <taxon>Actinomycetes</taxon>
        <taxon>Mycobacteriales</taxon>
        <taxon>Mycobacteriaceae</taxon>
        <taxon>Mycobacterium</taxon>
        <taxon>Mycobacterium tuberculosis complex</taxon>
    </lineage>
</organism>
<name>FRDC_MYCTO</name>
<gene>
    <name evidence="1" type="primary">frdC</name>
    <name type="ordered locus">MT1605</name>
</gene>
<evidence type="ECO:0000255" key="1">
    <source>
        <dbReference type="HAMAP-Rule" id="MF_00708"/>
    </source>
</evidence>
<evidence type="ECO:0000305" key="2"/>
<reference key="1">
    <citation type="journal article" date="2002" name="J. Bacteriol.">
        <title>Whole-genome comparison of Mycobacterium tuberculosis clinical and laboratory strains.</title>
        <authorList>
            <person name="Fleischmann R.D."/>
            <person name="Alland D."/>
            <person name="Eisen J.A."/>
            <person name="Carpenter L."/>
            <person name="White O."/>
            <person name="Peterson J.D."/>
            <person name="DeBoy R.T."/>
            <person name="Dodson R.J."/>
            <person name="Gwinn M.L."/>
            <person name="Haft D.H."/>
            <person name="Hickey E.K."/>
            <person name="Kolonay J.F."/>
            <person name="Nelson W.C."/>
            <person name="Umayam L.A."/>
            <person name="Ermolaeva M.D."/>
            <person name="Salzberg S.L."/>
            <person name="Delcher A."/>
            <person name="Utterback T.R."/>
            <person name="Weidman J.F."/>
            <person name="Khouri H.M."/>
            <person name="Gill J."/>
            <person name="Mikula A."/>
            <person name="Bishai W."/>
            <person name="Jacobs W.R. Jr."/>
            <person name="Venter J.C."/>
            <person name="Fraser C.M."/>
        </authorList>
    </citation>
    <scope>NUCLEOTIDE SEQUENCE [LARGE SCALE GENOMIC DNA]</scope>
    <source>
        <strain>CDC 1551 / Oshkosh</strain>
    </source>
</reference>
<comment type="function">
    <text evidence="1">Anchors the catalytic components of the fumarate reductase complex to the cell membrane, binds quinones.</text>
</comment>
<comment type="subunit">
    <text evidence="1">Part of an enzyme complex containing four subunits: a flavoprotein (FrdA), an iron-sulfur protein (FrdB), and two hydrophobic anchor proteins (FrdC and FrdD).</text>
</comment>
<comment type="subcellular location">
    <subcellularLocation>
        <location evidence="1">Cell membrane</location>
        <topology evidence="1">Multi-pass membrane protein</topology>
    </subcellularLocation>
</comment>
<comment type="similarity">
    <text evidence="1 2">Belongs to the FrdC family.</text>
</comment>
<protein>
    <recommendedName>
        <fullName evidence="1">Fumarate reductase subunit C</fullName>
    </recommendedName>
    <alternativeName>
        <fullName evidence="1">Quinol-fumarate reductase subunit C</fullName>
        <shortName evidence="1">QFR subunit C</shortName>
    </alternativeName>
</protein>